<protein>
    <recommendedName>
        <fullName evidence="1">ATP synthase subunit c</fullName>
    </recommendedName>
    <alternativeName>
        <fullName evidence="1">ATP synthase F(0) sector subunit c</fullName>
    </alternativeName>
    <alternativeName>
        <fullName evidence="1">F-type ATPase subunit c</fullName>
        <shortName evidence="1">F-ATPase subunit c</shortName>
    </alternativeName>
    <alternativeName>
        <fullName evidence="1">Lipid-binding protein</fullName>
    </alternativeName>
</protein>
<gene>
    <name evidence="1" type="primary">atpE</name>
    <name type="ordered locus">BF2231</name>
</gene>
<dbReference type="EMBL" id="CR626927">
    <property type="protein sequence ID" value="CAH07925.1"/>
    <property type="molecule type" value="Genomic_DNA"/>
</dbReference>
<dbReference type="RefSeq" id="WP_005777530.1">
    <property type="nucleotide sequence ID" value="NZ_UFTH01000001.1"/>
</dbReference>
<dbReference type="SMR" id="Q5LD85"/>
<dbReference type="PaxDb" id="272559-BF9343_2144"/>
<dbReference type="GeneID" id="93103551"/>
<dbReference type="KEGG" id="bfs:BF9343_2144"/>
<dbReference type="eggNOG" id="COG0636">
    <property type="taxonomic scope" value="Bacteria"/>
</dbReference>
<dbReference type="HOGENOM" id="CLU_148047_5_1_10"/>
<dbReference type="Proteomes" id="UP000006731">
    <property type="component" value="Chromosome"/>
</dbReference>
<dbReference type="GO" id="GO:0005886">
    <property type="term" value="C:plasma membrane"/>
    <property type="evidence" value="ECO:0007669"/>
    <property type="project" value="UniProtKB-SubCell"/>
</dbReference>
<dbReference type="GO" id="GO:0045259">
    <property type="term" value="C:proton-transporting ATP synthase complex"/>
    <property type="evidence" value="ECO:0007669"/>
    <property type="project" value="UniProtKB-KW"/>
</dbReference>
<dbReference type="GO" id="GO:0033177">
    <property type="term" value="C:proton-transporting two-sector ATPase complex, proton-transporting domain"/>
    <property type="evidence" value="ECO:0007669"/>
    <property type="project" value="InterPro"/>
</dbReference>
<dbReference type="GO" id="GO:0008289">
    <property type="term" value="F:lipid binding"/>
    <property type="evidence" value="ECO:0007669"/>
    <property type="project" value="UniProtKB-KW"/>
</dbReference>
<dbReference type="GO" id="GO:0046933">
    <property type="term" value="F:proton-transporting ATP synthase activity, rotational mechanism"/>
    <property type="evidence" value="ECO:0007669"/>
    <property type="project" value="UniProtKB-UniRule"/>
</dbReference>
<dbReference type="FunFam" id="1.20.20.10:FF:000004">
    <property type="entry name" value="ATP synthase subunit c"/>
    <property type="match status" value="1"/>
</dbReference>
<dbReference type="Gene3D" id="1.20.20.10">
    <property type="entry name" value="F1F0 ATP synthase subunit C"/>
    <property type="match status" value="1"/>
</dbReference>
<dbReference type="HAMAP" id="MF_01396">
    <property type="entry name" value="ATP_synth_c_bact"/>
    <property type="match status" value="1"/>
</dbReference>
<dbReference type="InterPro" id="IPR005953">
    <property type="entry name" value="ATP_synth_csu_bac/chlpt"/>
</dbReference>
<dbReference type="InterPro" id="IPR000454">
    <property type="entry name" value="ATP_synth_F0_csu"/>
</dbReference>
<dbReference type="InterPro" id="IPR020537">
    <property type="entry name" value="ATP_synth_F0_csu_DDCD_BS"/>
</dbReference>
<dbReference type="InterPro" id="IPR038662">
    <property type="entry name" value="ATP_synth_F0_csu_sf"/>
</dbReference>
<dbReference type="InterPro" id="IPR002379">
    <property type="entry name" value="ATPase_proteolipid_c-like_dom"/>
</dbReference>
<dbReference type="InterPro" id="IPR035921">
    <property type="entry name" value="F/V-ATP_Csub_sf"/>
</dbReference>
<dbReference type="NCBIfam" id="TIGR01260">
    <property type="entry name" value="ATP_synt_c"/>
    <property type="match status" value="1"/>
</dbReference>
<dbReference type="PANTHER" id="PTHR10031">
    <property type="entry name" value="ATP SYNTHASE LIPID-BINDING PROTEIN, MITOCHONDRIAL"/>
    <property type="match status" value="1"/>
</dbReference>
<dbReference type="PANTHER" id="PTHR10031:SF0">
    <property type="entry name" value="ATPASE PROTEIN 9"/>
    <property type="match status" value="1"/>
</dbReference>
<dbReference type="Pfam" id="PF00137">
    <property type="entry name" value="ATP-synt_C"/>
    <property type="match status" value="1"/>
</dbReference>
<dbReference type="PRINTS" id="PR00124">
    <property type="entry name" value="ATPASEC"/>
</dbReference>
<dbReference type="SUPFAM" id="SSF81333">
    <property type="entry name" value="F1F0 ATP synthase subunit C"/>
    <property type="match status" value="1"/>
</dbReference>
<dbReference type="PROSITE" id="PS00605">
    <property type="entry name" value="ATPASE_C"/>
    <property type="match status" value="1"/>
</dbReference>
<accession>Q5LD85</accession>
<proteinExistence type="inferred from homology"/>
<keyword id="KW-0066">ATP synthesis</keyword>
<keyword id="KW-0997">Cell inner membrane</keyword>
<keyword id="KW-1003">Cell membrane</keyword>
<keyword id="KW-0138">CF(0)</keyword>
<keyword id="KW-0375">Hydrogen ion transport</keyword>
<keyword id="KW-0406">Ion transport</keyword>
<keyword id="KW-0446">Lipid-binding</keyword>
<keyword id="KW-0472">Membrane</keyword>
<keyword id="KW-0812">Transmembrane</keyword>
<keyword id="KW-1133">Transmembrane helix</keyword>
<keyword id="KW-0813">Transport</keyword>
<reference key="1">
    <citation type="journal article" date="2005" name="Science">
        <title>Extensive DNA inversions in the B. fragilis genome control variable gene expression.</title>
        <authorList>
            <person name="Cerdeno-Tarraga A.-M."/>
            <person name="Patrick S."/>
            <person name="Crossman L.C."/>
            <person name="Blakely G."/>
            <person name="Abratt V."/>
            <person name="Lennard N."/>
            <person name="Poxton I."/>
            <person name="Duerden B."/>
            <person name="Harris B."/>
            <person name="Quail M.A."/>
            <person name="Barron A."/>
            <person name="Clark L."/>
            <person name="Corton C."/>
            <person name="Doggett J."/>
            <person name="Holden M.T.G."/>
            <person name="Larke N."/>
            <person name="Line A."/>
            <person name="Lord A."/>
            <person name="Norbertczak H."/>
            <person name="Ormond D."/>
            <person name="Price C."/>
            <person name="Rabbinowitsch E."/>
            <person name="Woodward J."/>
            <person name="Barrell B.G."/>
            <person name="Parkhill J."/>
        </authorList>
    </citation>
    <scope>NUCLEOTIDE SEQUENCE [LARGE SCALE GENOMIC DNA]</scope>
    <source>
        <strain>ATCC 25285 / DSM 2151 / CCUG 4856 / JCM 11019 / LMG 10263 / NCTC 9343 / Onslow / VPI 2553 / EN-2</strain>
    </source>
</reference>
<organism>
    <name type="scientific">Bacteroides fragilis (strain ATCC 25285 / DSM 2151 / CCUG 4856 / JCM 11019 / LMG 10263 / NCTC 9343 / Onslow / VPI 2553 / EN-2)</name>
    <dbReference type="NCBI Taxonomy" id="272559"/>
    <lineage>
        <taxon>Bacteria</taxon>
        <taxon>Pseudomonadati</taxon>
        <taxon>Bacteroidota</taxon>
        <taxon>Bacteroidia</taxon>
        <taxon>Bacteroidales</taxon>
        <taxon>Bacteroidaceae</taxon>
        <taxon>Bacteroides</taxon>
    </lineage>
</organism>
<comment type="function">
    <text evidence="1">F(1)F(0) ATP synthase produces ATP from ADP in the presence of a proton or sodium gradient. F-type ATPases consist of two structural domains, F(1) containing the extramembraneous catalytic core and F(0) containing the membrane proton channel, linked together by a central stalk and a peripheral stalk. During catalysis, ATP synthesis in the catalytic domain of F(1) is coupled via a rotary mechanism of the central stalk subunits to proton translocation.</text>
</comment>
<comment type="function">
    <text evidence="1">Key component of the F(0) channel; it plays a direct role in translocation across the membrane. A homomeric c-ring of between 10-14 subunits forms the central stalk rotor element with the F(1) delta and epsilon subunits.</text>
</comment>
<comment type="subunit">
    <text evidence="1">F-type ATPases have 2 components, F(1) - the catalytic core - and F(0) - the membrane proton channel. F(1) has five subunits: alpha(3), beta(3), gamma(1), delta(1), epsilon(1). F(0) has three main subunits: a(1), b(2) and c(10-14). The alpha and beta chains form an alternating ring which encloses part of the gamma chain. F(1) is attached to F(0) by a central stalk formed by the gamma and epsilon chains, while a peripheral stalk is formed by the delta and b chains.</text>
</comment>
<comment type="subcellular location">
    <subcellularLocation>
        <location evidence="1">Cell inner membrane</location>
        <topology evidence="1">Multi-pass membrane protein</topology>
    </subcellularLocation>
</comment>
<comment type="similarity">
    <text evidence="1">Belongs to the ATPase C chain family.</text>
</comment>
<name>ATPL_BACFN</name>
<feature type="chain" id="PRO_0000365853" description="ATP synthase subunit c">
    <location>
        <begin position="1"/>
        <end position="85"/>
    </location>
</feature>
<feature type="transmembrane region" description="Helical" evidence="1">
    <location>
        <begin position="19"/>
        <end position="39"/>
    </location>
</feature>
<feature type="transmembrane region" description="Helical" evidence="1">
    <location>
        <begin position="62"/>
        <end position="82"/>
    </location>
</feature>
<feature type="site" description="Reversibly protonated during proton transport" evidence="1">
    <location>
        <position position="69"/>
    </location>
</feature>
<sequence length="85" mass="8196">MLLSVLLQAAAAGVGLSKLGAALGAGLAVIGAGIGIGKIGGSAMEGIARQPEASGDIRMNMIIAAALVEGVALLALVVCLLVLFL</sequence>
<evidence type="ECO:0000255" key="1">
    <source>
        <dbReference type="HAMAP-Rule" id="MF_01396"/>
    </source>
</evidence>